<dbReference type="EC" id="2.1.1.192" evidence="1"/>
<dbReference type="EMBL" id="BX248358">
    <property type="protein sequence ID" value="CAE50029.1"/>
    <property type="molecule type" value="Genomic_DNA"/>
</dbReference>
<dbReference type="RefSeq" id="WP_010935109.1">
    <property type="nucleotide sequence ID" value="NC_002935.2"/>
</dbReference>
<dbReference type="SMR" id="Q6NGK9"/>
<dbReference type="STRING" id="257309.DIP1502"/>
<dbReference type="KEGG" id="cdi:DIP1502"/>
<dbReference type="HOGENOM" id="CLU_029101_0_2_11"/>
<dbReference type="Proteomes" id="UP000002198">
    <property type="component" value="Chromosome"/>
</dbReference>
<dbReference type="GO" id="GO:0005737">
    <property type="term" value="C:cytoplasm"/>
    <property type="evidence" value="ECO:0007669"/>
    <property type="project" value="UniProtKB-SubCell"/>
</dbReference>
<dbReference type="GO" id="GO:0051539">
    <property type="term" value="F:4 iron, 4 sulfur cluster binding"/>
    <property type="evidence" value="ECO:0007669"/>
    <property type="project" value="UniProtKB-UniRule"/>
</dbReference>
<dbReference type="GO" id="GO:0046872">
    <property type="term" value="F:metal ion binding"/>
    <property type="evidence" value="ECO:0007669"/>
    <property type="project" value="UniProtKB-KW"/>
</dbReference>
<dbReference type="GO" id="GO:0070040">
    <property type="term" value="F:rRNA (adenine(2503)-C2-)-methyltransferase activity"/>
    <property type="evidence" value="ECO:0007669"/>
    <property type="project" value="UniProtKB-UniRule"/>
</dbReference>
<dbReference type="GO" id="GO:0019843">
    <property type="term" value="F:rRNA binding"/>
    <property type="evidence" value="ECO:0007669"/>
    <property type="project" value="UniProtKB-UniRule"/>
</dbReference>
<dbReference type="GO" id="GO:0002935">
    <property type="term" value="F:tRNA (adenine(37)-C2)-methyltransferase activity"/>
    <property type="evidence" value="ECO:0007669"/>
    <property type="project" value="UniProtKB-UniRule"/>
</dbReference>
<dbReference type="GO" id="GO:0000049">
    <property type="term" value="F:tRNA binding"/>
    <property type="evidence" value="ECO:0007669"/>
    <property type="project" value="UniProtKB-UniRule"/>
</dbReference>
<dbReference type="GO" id="GO:0070475">
    <property type="term" value="P:rRNA base methylation"/>
    <property type="evidence" value="ECO:0007669"/>
    <property type="project" value="UniProtKB-UniRule"/>
</dbReference>
<dbReference type="GO" id="GO:0030488">
    <property type="term" value="P:tRNA methylation"/>
    <property type="evidence" value="ECO:0007669"/>
    <property type="project" value="UniProtKB-UniRule"/>
</dbReference>
<dbReference type="CDD" id="cd01335">
    <property type="entry name" value="Radical_SAM"/>
    <property type="match status" value="1"/>
</dbReference>
<dbReference type="FunFam" id="3.20.20.70:FF:000014">
    <property type="entry name" value="Probable dual-specificity RNA methyltransferase RlmN"/>
    <property type="match status" value="1"/>
</dbReference>
<dbReference type="Gene3D" id="1.10.150.530">
    <property type="match status" value="1"/>
</dbReference>
<dbReference type="Gene3D" id="3.20.20.70">
    <property type="entry name" value="Aldolase class I"/>
    <property type="match status" value="1"/>
</dbReference>
<dbReference type="HAMAP" id="MF_01849">
    <property type="entry name" value="RNA_methyltr_RlmN"/>
    <property type="match status" value="1"/>
</dbReference>
<dbReference type="InterPro" id="IPR013785">
    <property type="entry name" value="Aldolase_TIM"/>
</dbReference>
<dbReference type="InterPro" id="IPR040072">
    <property type="entry name" value="Methyltransferase_A"/>
</dbReference>
<dbReference type="InterPro" id="IPR027492">
    <property type="entry name" value="RNA_MTrfase_RlmN"/>
</dbReference>
<dbReference type="InterPro" id="IPR004383">
    <property type="entry name" value="rRNA_lsu_MTrfase_RlmN/Cfr"/>
</dbReference>
<dbReference type="InterPro" id="IPR007197">
    <property type="entry name" value="rSAM"/>
</dbReference>
<dbReference type="NCBIfam" id="TIGR00048">
    <property type="entry name" value="rRNA_mod_RlmN"/>
    <property type="match status" value="1"/>
</dbReference>
<dbReference type="PANTHER" id="PTHR30544">
    <property type="entry name" value="23S RRNA METHYLTRANSFERASE"/>
    <property type="match status" value="1"/>
</dbReference>
<dbReference type="PANTHER" id="PTHR30544:SF5">
    <property type="entry name" value="RADICAL SAM CORE DOMAIN-CONTAINING PROTEIN"/>
    <property type="match status" value="1"/>
</dbReference>
<dbReference type="Pfam" id="PF04055">
    <property type="entry name" value="Radical_SAM"/>
    <property type="match status" value="1"/>
</dbReference>
<dbReference type="PIRSF" id="PIRSF006004">
    <property type="entry name" value="CHP00048"/>
    <property type="match status" value="1"/>
</dbReference>
<dbReference type="SFLD" id="SFLDF00275">
    <property type="entry name" value="adenosine_C2_methyltransferase"/>
    <property type="match status" value="1"/>
</dbReference>
<dbReference type="SFLD" id="SFLDS00029">
    <property type="entry name" value="Radical_SAM"/>
    <property type="match status" value="1"/>
</dbReference>
<dbReference type="SUPFAM" id="SSF102114">
    <property type="entry name" value="Radical SAM enzymes"/>
    <property type="match status" value="1"/>
</dbReference>
<dbReference type="PROSITE" id="PS51918">
    <property type="entry name" value="RADICAL_SAM"/>
    <property type="match status" value="1"/>
</dbReference>
<proteinExistence type="inferred from homology"/>
<accession>Q6NGK9</accession>
<name>RLMN_CORDI</name>
<evidence type="ECO:0000255" key="1">
    <source>
        <dbReference type="HAMAP-Rule" id="MF_01849"/>
    </source>
</evidence>
<evidence type="ECO:0000255" key="2">
    <source>
        <dbReference type="PROSITE-ProRule" id="PRU01266"/>
    </source>
</evidence>
<sequence length="368" mass="40439">MTNPTKPIPLNFDKPRRFMPPKHFADLSADERIDALKELGLPKFRANQIARHYYGRLEADPSTMTDLPAAAREKVKDALFPQLMQPVRAVQADDGETQKTLWKLHDGTLLESVLMRYPNRATLCISSQAGCGMACPFCATGQGGLDRNLSTGEIVDQVRAASATMQAEGGRLSNIVFMGMGEPLANYKRVVSAVRQITAPVPEGFGISQRNVTVSTVGLAPAIRKLADEDLSVTLAVSLHTPDDELRNTLVPTNNRWEVAEVLDAARYYADRSGRRVSIEYALIRDVNDQGWRADMLGKKLHKALGPLVHVNLIPLNPTPGSKWDASPMDRQKEFVQRVIAQGVTCTVRDTRGQEIAAACGQLAAEER</sequence>
<comment type="function">
    <text evidence="1">Specifically methylates position 2 of adenine 2503 in 23S rRNA and position 2 of adenine 37 in tRNAs.</text>
</comment>
<comment type="catalytic activity">
    <reaction evidence="1">
        <text>adenosine(2503) in 23S rRNA + 2 reduced [2Fe-2S]-[ferredoxin] + 2 S-adenosyl-L-methionine = 2-methyladenosine(2503) in 23S rRNA + 5'-deoxyadenosine + L-methionine + 2 oxidized [2Fe-2S]-[ferredoxin] + S-adenosyl-L-homocysteine</text>
        <dbReference type="Rhea" id="RHEA:42916"/>
        <dbReference type="Rhea" id="RHEA-COMP:10000"/>
        <dbReference type="Rhea" id="RHEA-COMP:10001"/>
        <dbReference type="Rhea" id="RHEA-COMP:10152"/>
        <dbReference type="Rhea" id="RHEA-COMP:10282"/>
        <dbReference type="ChEBI" id="CHEBI:17319"/>
        <dbReference type="ChEBI" id="CHEBI:33737"/>
        <dbReference type="ChEBI" id="CHEBI:33738"/>
        <dbReference type="ChEBI" id="CHEBI:57844"/>
        <dbReference type="ChEBI" id="CHEBI:57856"/>
        <dbReference type="ChEBI" id="CHEBI:59789"/>
        <dbReference type="ChEBI" id="CHEBI:74411"/>
        <dbReference type="ChEBI" id="CHEBI:74497"/>
        <dbReference type="EC" id="2.1.1.192"/>
    </reaction>
</comment>
<comment type="catalytic activity">
    <reaction evidence="1">
        <text>adenosine(37) in tRNA + 2 reduced [2Fe-2S]-[ferredoxin] + 2 S-adenosyl-L-methionine = 2-methyladenosine(37) in tRNA + 5'-deoxyadenosine + L-methionine + 2 oxidized [2Fe-2S]-[ferredoxin] + S-adenosyl-L-homocysteine</text>
        <dbReference type="Rhea" id="RHEA:43332"/>
        <dbReference type="Rhea" id="RHEA-COMP:10000"/>
        <dbReference type="Rhea" id="RHEA-COMP:10001"/>
        <dbReference type="Rhea" id="RHEA-COMP:10162"/>
        <dbReference type="Rhea" id="RHEA-COMP:10485"/>
        <dbReference type="ChEBI" id="CHEBI:17319"/>
        <dbReference type="ChEBI" id="CHEBI:33737"/>
        <dbReference type="ChEBI" id="CHEBI:33738"/>
        <dbReference type="ChEBI" id="CHEBI:57844"/>
        <dbReference type="ChEBI" id="CHEBI:57856"/>
        <dbReference type="ChEBI" id="CHEBI:59789"/>
        <dbReference type="ChEBI" id="CHEBI:74411"/>
        <dbReference type="ChEBI" id="CHEBI:74497"/>
        <dbReference type="EC" id="2.1.1.192"/>
    </reaction>
</comment>
<comment type="cofactor">
    <cofactor evidence="1">
        <name>[4Fe-4S] cluster</name>
        <dbReference type="ChEBI" id="CHEBI:49883"/>
    </cofactor>
    <text evidence="1">Binds 1 [4Fe-4S] cluster. The cluster is coordinated with 3 cysteines and an exchangeable S-adenosyl-L-methionine.</text>
</comment>
<comment type="subcellular location">
    <subcellularLocation>
        <location evidence="1">Cytoplasm</location>
    </subcellularLocation>
</comment>
<comment type="miscellaneous">
    <text evidence="1">Reaction proceeds by a ping-pong mechanism involving intermediate methylation of a conserved cysteine residue.</text>
</comment>
<comment type="similarity">
    <text evidence="1">Belongs to the radical SAM superfamily. RlmN family.</text>
</comment>
<gene>
    <name evidence="1" type="primary">rlmN</name>
    <name type="ordered locus">DIP1502</name>
</gene>
<reference key="1">
    <citation type="journal article" date="2003" name="Nucleic Acids Res.">
        <title>The complete genome sequence and analysis of Corynebacterium diphtheriae NCTC13129.</title>
        <authorList>
            <person name="Cerdeno-Tarraga A.-M."/>
            <person name="Efstratiou A."/>
            <person name="Dover L.G."/>
            <person name="Holden M.T.G."/>
            <person name="Pallen M.J."/>
            <person name="Bentley S.D."/>
            <person name="Besra G.S."/>
            <person name="Churcher C.M."/>
            <person name="James K.D."/>
            <person name="De Zoysa A."/>
            <person name="Chillingworth T."/>
            <person name="Cronin A."/>
            <person name="Dowd L."/>
            <person name="Feltwell T."/>
            <person name="Hamlin N."/>
            <person name="Holroyd S."/>
            <person name="Jagels K."/>
            <person name="Moule S."/>
            <person name="Quail M.A."/>
            <person name="Rabbinowitsch E."/>
            <person name="Rutherford K.M."/>
            <person name="Thomson N.R."/>
            <person name="Unwin L."/>
            <person name="Whitehead S."/>
            <person name="Barrell B.G."/>
            <person name="Parkhill J."/>
        </authorList>
    </citation>
    <scope>NUCLEOTIDE SEQUENCE [LARGE SCALE GENOMIC DNA]</scope>
    <source>
        <strain>ATCC 700971 / NCTC 13129 / Biotype gravis</strain>
    </source>
</reference>
<organism>
    <name type="scientific">Corynebacterium diphtheriae (strain ATCC 700971 / NCTC 13129 / Biotype gravis)</name>
    <dbReference type="NCBI Taxonomy" id="257309"/>
    <lineage>
        <taxon>Bacteria</taxon>
        <taxon>Bacillati</taxon>
        <taxon>Actinomycetota</taxon>
        <taxon>Actinomycetes</taxon>
        <taxon>Mycobacteriales</taxon>
        <taxon>Corynebacteriaceae</taxon>
        <taxon>Corynebacterium</taxon>
    </lineage>
</organism>
<protein>
    <recommendedName>
        <fullName evidence="1">Probable dual-specificity RNA methyltransferase RlmN</fullName>
        <ecNumber evidence="1">2.1.1.192</ecNumber>
    </recommendedName>
    <alternativeName>
        <fullName evidence="1">23S rRNA (adenine(2503)-C(2))-methyltransferase</fullName>
    </alternativeName>
    <alternativeName>
        <fullName evidence="1">23S rRNA m2A2503 methyltransferase</fullName>
    </alternativeName>
    <alternativeName>
        <fullName evidence="1">Ribosomal RNA large subunit methyltransferase N</fullName>
    </alternativeName>
    <alternativeName>
        <fullName evidence="1">tRNA (adenine(37)-C(2))-methyltransferase</fullName>
    </alternativeName>
    <alternativeName>
        <fullName evidence="1">tRNA m2A37 methyltransferase</fullName>
    </alternativeName>
</protein>
<feature type="chain" id="PRO_0000350134" description="Probable dual-specificity RNA methyltransferase RlmN">
    <location>
        <begin position="1"/>
        <end position="368"/>
    </location>
</feature>
<feature type="domain" description="Radical SAM core" evidence="2">
    <location>
        <begin position="117"/>
        <end position="355"/>
    </location>
</feature>
<feature type="active site" description="Proton acceptor" evidence="1">
    <location>
        <position position="111"/>
    </location>
</feature>
<feature type="active site" description="S-methylcysteine intermediate" evidence="1">
    <location>
        <position position="360"/>
    </location>
</feature>
<feature type="binding site" evidence="1">
    <location>
        <position position="131"/>
    </location>
    <ligand>
        <name>[4Fe-4S] cluster</name>
        <dbReference type="ChEBI" id="CHEBI:49883"/>
        <note>4Fe-4S-S-AdoMet</note>
    </ligand>
</feature>
<feature type="binding site" evidence="1">
    <location>
        <position position="135"/>
    </location>
    <ligand>
        <name>[4Fe-4S] cluster</name>
        <dbReference type="ChEBI" id="CHEBI:49883"/>
        <note>4Fe-4S-S-AdoMet</note>
    </ligand>
</feature>
<feature type="binding site" evidence="1">
    <location>
        <position position="138"/>
    </location>
    <ligand>
        <name>[4Fe-4S] cluster</name>
        <dbReference type="ChEBI" id="CHEBI:49883"/>
        <note>4Fe-4S-S-AdoMet</note>
    </ligand>
</feature>
<feature type="binding site" evidence="1">
    <location>
        <begin position="181"/>
        <end position="182"/>
    </location>
    <ligand>
        <name>S-adenosyl-L-methionine</name>
        <dbReference type="ChEBI" id="CHEBI:59789"/>
    </ligand>
</feature>
<feature type="binding site" evidence="1">
    <location>
        <position position="215"/>
    </location>
    <ligand>
        <name>S-adenosyl-L-methionine</name>
        <dbReference type="ChEBI" id="CHEBI:59789"/>
    </ligand>
</feature>
<feature type="binding site" evidence="1">
    <location>
        <begin position="238"/>
        <end position="240"/>
    </location>
    <ligand>
        <name>S-adenosyl-L-methionine</name>
        <dbReference type="ChEBI" id="CHEBI:59789"/>
    </ligand>
</feature>
<feature type="binding site" evidence="1">
    <location>
        <position position="317"/>
    </location>
    <ligand>
        <name>S-adenosyl-L-methionine</name>
        <dbReference type="ChEBI" id="CHEBI:59789"/>
    </ligand>
</feature>
<feature type="disulfide bond" description="(transient)" evidence="1">
    <location>
        <begin position="124"/>
        <end position="360"/>
    </location>
</feature>
<keyword id="KW-0004">4Fe-4S</keyword>
<keyword id="KW-0963">Cytoplasm</keyword>
<keyword id="KW-1015">Disulfide bond</keyword>
<keyword id="KW-0408">Iron</keyword>
<keyword id="KW-0411">Iron-sulfur</keyword>
<keyword id="KW-0479">Metal-binding</keyword>
<keyword id="KW-0489">Methyltransferase</keyword>
<keyword id="KW-1185">Reference proteome</keyword>
<keyword id="KW-0698">rRNA processing</keyword>
<keyword id="KW-0949">S-adenosyl-L-methionine</keyword>
<keyword id="KW-0808">Transferase</keyword>
<keyword id="KW-0819">tRNA processing</keyword>